<name>RIBA_PSEPW</name>
<feature type="chain" id="PRO_1000098271" description="GTP cyclohydrolase-2">
    <location>
        <begin position="1"/>
        <end position="205"/>
    </location>
</feature>
<feature type="active site" description="Proton acceptor" evidence="1">
    <location>
        <position position="126"/>
    </location>
</feature>
<feature type="active site" description="Nucleophile" evidence="1">
    <location>
        <position position="128"/>
    </location>
</feature>
<feature type="binding site" evidence="1">
    <location>
        <begin position="49"/>
        <end position="53"/>
    </location>
    <ligand>
        <name>GTP</name>
        <dbReference type="ChEBI" id="CHEBI:37565"/>
    </ligand>
</feature>
<feature type="binding site" evidence="1">
    <location>
        <position position="54"/>
    </location>
    <ligand>
        <name>Zn(2+)</name>
        <dbReference type="ChEBI" id="CHEBI:29105"/>
        <note>catalytic</note>
    </ligand>
</feature>
<feature type="binding site" evidence="1">
    <location>
        <position position="65"/>
    </location>
    <ligand>
        <name>Zn(2+)</name>
        <dbReference type="ChEBI" id="CHEBI:29105"/>
        <note>catalytic</note>
    </ligand>
</feature>
<feature type="binding site" evidence="1">
    <location>
        <position position="67"/>
    </location>
    <ligand>
        <name>Zn(2+)</name>
        <dbReference type="ChEBI" id="CHEBI:29105"/>
        <note>catalytic</note>
    </ligand>
</feature>
<feature type="binding site" evidence="1">
    <location>
        <position position="70"/>
    </location>
    <ligand>
        <name>GTP</name>
        <dbReference type="ChEBI" id="CHEBI:37565"/>
    </ligand>
</feature>
<feature type="binding site" evidence="1">
    <location>
        <begin position="92"/>
        <end position="94"/>
    </location>
    <ligand>
        <name>GTP</name>
        <dbReference type="ChEBI" id="CHEBI:37565"/>
    </ligand>
</feature>
<feature type="binding site" evidence="1">
    <location>
        <position position="114"/>
    </location>
    <ligand>
        <name>GTP</name>
        <dbReference type="ChEBI" id="CHEBI:37565"/>
    </ligand>
</feature>
<feature type="binding site" evidence="1">
    <location>
        <position position="149"/>
    </location>
    <ligand>
        <name>GTP</name>
        <dbReference type="ChEBI" id="CHEBI:37565"/>
    </ligand>
</feature>
<feature type="binding site" evidence="1">
    <location>
        <position position="154"/>
    </location>
    <ligand>
        <name>GTP</name>
        <dbReference type="ChEBI" id="CHEBI:37565"/>
    </ligand>
</feature>
<reference key="1">
    <citation type="submission" date="2008-02" db="EMBL/GenBank/DDBJ databases">
        <title>Complete sequence of Pseudomonas putida W619.</title>
        <authorList>
            <person name="Copeland A."/>
            <person name="Lucas S."/>
            <person name="Lapidus A."/>
            <person name="Barry K."/>
            <person name="Detter J.C."/>
            <person name="Glavina del Rio T."/>
            <person name="Dalin E."/>
            <person name="Tice H."/>
            <person name="Pitluck S."/>
            <person name="Chain P."/>
            <person name="Malfatti S."/>
            <person name="Shin M."/>
            <person name="Vergez L."/>
            <person name="Schmutz J."/>
            <person name="Larimer F."/>
            <person name="Land M."/>
            <person name="Hauser L."/>
            <person name="Kyrpides N."/>
            <person name="Kim E."/>
            <person name="Taghavi S."/>
            <person name="Vangronsveld D."/>
            <person name="van der Lelie D."/>
            <person name="Richardson P."/>
        </authorList>
    </citation>
    <scope>NUCLEOTIDE SEQUENCE [LARGE SCALE GENOMIC DNA]</scope>
    <source>
        <strain>W619</strain>
    </source>
</reference>
<organism>
    <name type="scientific">Pseudomonas putida (strain W619)</name>
    <dbReference type="NCBI Taxonomy" id="390235"/>
    <lineage>
        <taxon>Bacteria</taxon>
        <taxon>Pseudomonadati</taxon>
        <taxon>Pseudomonadota</taxon>
        <taxon>Gammaproteobacteria</taxon>
        <taxon>Pseudomonadales</taxon>
        <taxon>Pseudomonadaceae</taxon>
        <taxon>Pseudomonas</taxon>
    </lineage>
</organism>
<keyword id="KW-0342">GTP-binding</keyword>
<keyword id="KW-0378">Hydrolase</keyword>
<keyword id="KW-0479">Metal-binding</keyword>
<keyword id="KW-0547">Nucleotide-binding</keyword>
<keyword id="KW-0686">Riboflavin biosynthesis</keyword>
<keyword id="KW-0862">Zinc</keyword>
<evidence type="ECO:0000255" key="1">
    <source>
        <dbReference type="HAMAP-Rule" id="MF_00179"/>
    </source>
</evidence>
<dbReference type="EC" id="3.5.4.25" evidence="1"/>
<dbReference type="EMBL" id="CP000949">
    <property type="protein sequence ID" value="ACA71080.1"/>
    <property type="molecule type" value="Genomic_DNA"/>
</dbReference>
<dbReference type="SMR" id="B1J3G0"/>
<dbReference type="STRING" id="390235.PputW619_0575"/>
<dbReference type="KEGG" id="ppw:PputW619_0575"/>
<dbReference type="eggNOG" id="COG0807">
    <property type="taxonomic scope" value="Bacteria"/>
</dbReference>
<dbReference type="HOGENOM" id="CLU_020273_2_1_6"/>
<dbReference type="OrthoDB" id="9793111at2"/>
<dbReference type="UniPathway" id="UPA00275">
    <property type="reaction ID" value="UER00400"/>
</dbReference>
<dbReference type="GO" id="GO:0005829">
    <property type="term" value="C:cytosol"/>
    <property type="evidence" value="ECO:0007669"/>
    <property type="project" value="TreeGrafter"/>
</dbReference>
<dbReference type="GO" id="GO:0005525">
    <property type="term" value="F:GTP binding"/>
    <property type="evidence" value="ECO:0007669"/>
    <property type="project" value="UniProtKB-KW"/>
</dbReference>
<dbReference type="GO" id="GO:0003935">
    <property type="term" value="F:GTP cyclohydrolase II activity"/>
    <property type="evidence" value="ECO:0007669"/>
    <property type="project" value="UniProtKB-UniRule"/>
</dbReference>
<dbReference type="GO" id="GO:0008270">
    <property type="term" value="F:zinc ion binding"/>
    <property type="evidence" value="ECO:0007669"/>
    <property type="project" value="UniProtKB-UniRule"/>
</dbReference>
<dbReference type="GO" id="GO:0009231">
    <property type="term" value="P:riboflavin biosynthetic process"/>
    <property type="evidence" value="ECO:0007669"/>
    <property type="project" value="UniProtKB-UniRule"/>
</dbReference>
<dbReference type="CDD" id="cd00641">
    <property type="entry name" value="GTP_cyclohydro2"/>
    <property type="match status" value="1"/>
</dbReference>
<dbReference type="FunFam" id="3.40.50.10990:FF:000002">
    <property type="entry name" value="GTP cyclohydrolase-2"/>
    <property type="match status" value="1"/>
</dbReference>
<dbReference type="Gene3D" id="3.40.50.10990">
    <property type="entry name" value="GTP cyclohydrolase II"/>
    <property type="match status" value="1"/>
</dbReference>
<dbReference type="HAMAP" id="MF_00179">
    <property type="entry name" value="RibA"/>
    <property type="match status" value="1"/>
</dbReference>
<dbReference type="InterPro" id="IPR032677">
    <property type="entry name" value="GTP_cyclohydro_II"/>
</dbReference>
<dbReference type="InterPro" id="IPR000926">
    <property type="entry name" value="RibA"/>
</dbReference>
<dbReference type="InterPro" id="IPR036144">
    <property type="entry name" value="RibA-like_sf"/>
</dbReference>
<dbReference type="NCBIfam" id="NF001591">
    <property type="entry name" value="PRK00393.1"/>
    <property type="match status" value="1"/>
</dbReference>
<dbReference type="NCBIfam" id="TIGR00505">
    <property type="entry name" value="ribA"/>
    <property type="match status" value="1"/>
</dbReference>
<dbReference type="PANTHER" id="PTHR21327:SF18">
    <property type="entry name" value="3,4-DIHYDROXY-2-BUTANONE 4-PHOSPHATE SYNTHASE"/>
    <property type="match status" value="1"/>
</dbReference>
<dbReference type="PANTHER" id="PTHR21327">
    <property type="entry name" value="GTP CYCLOHYDROLASE II-RELATED"/>
    <property type="match status" value="1"/>
</dbReference>
<dbReference type="Pfam" id="PF00925">
    <property type="entry name" value="GTP_cyclohydro2"/>
    <property type="match status" value="1"/>
</dbReference>
<dbReference type="SUPFAM" id="SSF142695">
    <property type="entry name" value="RibA-like"/>
    <property type="match status" value="1"/>
</dbReference>
<sequence>MPVVFVAASKLPTPFATFTMHGFLDEATGREHVVLSLGDIADGEPVLGRLHSECLTGDALFSQRCDCGSQLEAALQAIAREGRGVLLYLRQEGRGIGLLNKIRAYELQDGGADTVEANERLGFAADQRDYAICLPMLEHLGVKSLRLMTNNPRKVKALTDMNIKVAERVPLHTGHNPHNRYYLATKADKLGHMLGNEHQGEVPQA</sequence>
<comment type="function">
    <text evidence="1">Catalyzes the conversion of GTP to 2,5-diamino-6-ribosylamino-4(3H)-pyrimidinone 5'-phosphate (DARP), formate and pyrophosphate.</text>
</comment>
<comment type="catalytic activity">
    <reaction evidence="1">
        <text>GTP + 4 H2O = 2,5-diamino-6-hydroxy-4-(5-phosphoribosylamino)-pyrimidine + formate + 2 phosphate + 3 H(+)</text>
        <dbReference type="Rhea" id="RHEA:23704"/>
        <dbReference type="ChEBI" id="CHEBI:15377"/>
        <dbReference type="ChEBI" id="CHEBI:15378"/>
        <dbReference type="ChEBI" id="CHEBI:15740"/>
        <dbReference type="ChEBI" id="CHEBI:37565"/>
        <dbReference type="ChEBI" id="CHEBI:43474"/>
        <dbReference type="ChEBI" id="CHEBI:58614"/>
        <dbReference type="EC" id="3.5.4.25"/>
    </reaction>
</comment>
<comment type="cofactor">
    <cofactor evidence="1">
        <name>Zn(2+)</name>
        <dbReference type="ChEBI" id="CHEBI:29105"/>
    </cofactor>
    <text evidence="1">Binds 1 zinc ion per subunit.</text>
</comment>
<comment type="pathway">
    <text evidence="1">Cofactor biosynthesis; riboflavin biosynthesis; 5-amino-6-(D-ribitylamino)uracil from GTP: step 1/4.</text>
</comment>
<comment type="similarity">
    <text evidence="1">Belongs to the GTP cyclohydrolase II family.</text>
</comment>
<gene>
    <name evidence="1" type="primary">ribA</name>
    <name type="ordered locus">PputW619_0575</name>
</gene>
<protein>
    <recommendedName>
        <fullName evidence="1">GTP cyclohydrolase-2</fullName>
        <ecNumber evidence="1">3.5.4.25</ecNumber>
    </recommendedName>
    <alternativeName>
        <fullName evidence="1">GTP cyclohydrolase II</fullName>
    </alternativeName>
</protein>
<accession>B1J3G0</accession>
<proteinExistence type="inferred from homology"/>